<name>COAX_CELJU</name>
<comment type="function">
    <text evidence="1">Catalyzes the phosphorylation of pantothenate (Pan), the first step in CoA biosynthesis.</text>
</comment>
<comment type="catalytic activity">
    <reaction evidence="1">
        <text>(R)-pantothenate + ATP = (R)-4'-phosphopantothenate + ADP + H(+)</text>
        <dbReference type="Rhea" id="RHEA:16373"/>
        <dbReference type="ChEBI" id="CHEBI:10986"/>
        <dbReference type="ChEBI" id="CHEBI:15378"/>
        <dbReference type="ChEBI" id="CHEBI:29032"/>
        <dbReference type="ChEBI" id="CHEBI:30616"/>
        <dbReference type="ChEBI" id="CHEBI:456216"/>
        <dbReference type="EC" id="2.7.1.33"/>
    </reaction>
</comment>
<comment type="cofactor">
    <cofactor evidence="1">
        <name>NH4(+)</name>
        <dbReference type="ChEBI" id="CHEBI:28938"/>
    </cofactor>
    <cofactor evidence="1">
        <name>K(+)</name>
        <dbReference type="ChEBI" id="CHEBI:29103"/>
    </cofactor>
    <text evidence="1">A monovalent cation. Ammonium or potassium.</text>
</comment>
<comment type="pathway">
    <text evidence="1">Cofactor biosynthesis; coenzyme A biosynthesis; CoA from (R)-pantothenate: step 1/5.</text>
</comment>
<comment type="subunit">
    <text evidence="1">Homodimer.</text>
</comment>
<comment type="subcellular location">
    <subcellularLocation>
        <location evidence="1">Cytoplasm</location>
    </subcellularLocation>
</comment>
<comment type="similarity">
    <text evidence="1">Belongs to the type III pantothenate kinase family.</text>
</comment>
<keyword id="KW-0067">ATP-binding</keyword>
<keyword id="KW-0173">Coenzyme A biosynthesis</keyword>
<keyword id="KW-0963">Cytoplasm</keyword>
<keyword id="KW-0418">Kinase</keyword>
<keyword id="KW-0547">Nucleotide-binding</keyword>
<keyword id="KW-0630">Potassium</keyword>
<keyword id="KW-1185">Reference proteome</keyword>
<keyword id="KW-0808">Transferase</keyword>
<reference key="1">
    <citation type="journal article" date="2008" name="J. Bacteriol.">
        <title>Insights into plant cell wall degradation from the genome sequence of the soil bacterium Cellvibrio japonicus.</title>
        <authorList>
            <person name="DeBoy R.T."/>
            <person name="Mongodin E.F."/>
            <person name="Fouts D.E."/>
            <person name="Tailford L.E."/>
            <person name="Khouri H."/>
            <person name="Emerson J.B."/>
            <person name="Mohamoud Y."/>
            <person name="Watkins K."/>
            <person name="Henrissat B."/>
            <person name="Gilbert H.J."/>
            <person name="Nelson K.E."/>
        </authorList>
    </citation>
    <scope>NUCLEOTIDE SEQUENCE [LARGE SCALE GENOMIC DNA]</scope>
    <source>
        <strain>Ueda107</strain>
    </source>
</reference>
<proteinExistence type="inferred from homology"/>
<sequence>MILQIDMGNTRLKWRVKNKLASLVEGHCLWSDAEDALMASLMPYGGLISRILVASVRSQEDNQAFMQLLGRLTPLVPEFAYSQSHNDGLVNGYADPERLGVDRWLALLAGYDRHKAYPFMLMSAGTALTLDLVDGQGHHLGGYIAPGLDVFVRAVSHSAAQINVVKSNNLFDASPGRSTVDAVHHAFAAMLSGLVQKSYELLSRNNGFAPVLLITGGDADVVKGLFHQGITCPDLVFSGLDIYFDLRAGNNG</sequence>
<accession>B3PK21</accession>
<feature type="chain" id="PRO_1000140231" description="Type III pantothenate kinase">
    <location>
        <begin position="1"/>
        <end position="252"/>
    </location>
</feature>
<feature type="active site" description="Proton acceptor" evidence="1">
    <location>
        <position position="102"/>
    </location>
</feature>
<feature type="binding site" evidence="1">
    <location>
        <begin position="6"/>
        <end position="13"/>
    </location>
    <ligand>
        <name>ATP</name>
        <dbReference type="ChEBI" id="CHEBI:30616"/>
    </ligand>
</feature>
<feature type="binding site" evidence="1">
    <location>
        <position position="93"/>
    </location>
    <ligand>
        <name>substrate</name>
    </ligand>
</feature>
<feature type="binding site" evidence="1">
    <location>
        <begin position="100"/>
        <end position="103"/>
    </location>
    <ligand>
        <name>substrate</name>
    </ligand>
</feature>
<feature type="binding site" evidence="1">
    <location>
        <position position="126"/>
    </location>
    <ligand>
        <name>ATP</name>
        <dbReference type="ChEBI" id="CHEBI:30616"/>
    </ligand>
</feature>
<feature type="binding site" evidence="1">
    <location>
        <position position="179"/>
    </location>
    <ligand>
        <name>substrate</name>
    </ligand>
</feature>
<protein>
    <recommendedName>
        <fullName evidence="1">Type III pantothenate kinase</fullName>
        <ecNumber evidence="1">2.7.1.33</ecNumber>
    </recommendedName>
    <alternativeName>
        <fullName evidence="1">PanK-III</fullName>
    </alternativeName>
    <alternativeName>
        <fullName evidence="1">Pantothenic acid kinase</fullName>
    </alternativeName>
</protein>
<dbReference type="EC" id="2.7.1.33" evidence="1"/>
<dbReference type="EMBL" id="CP000934">
    <property type="protein sequence ID" value="ACE82684.1"/>
    <property type="molecule type" value="Genomic_DNA"/>
</dbReference>
<dbReference type="RefSeq" id="WP_012486348.1">
    <property type="nucleotide sequence ID" value="NC_010995.1"/>
</dbReference>
<dbReference type="SMR" id="B3PK21"/>
<dbReference type="STRING" id="498211.CJA_0678"/>
<dbReference type="KEGG" id="cja:CJA_0678"/>
<dbReference type="eggNOG" id="COG1521">
    <property type="taxonomic scope" value="Bacteria"/>
</dbReference>
<dbReference type="HOGENOM" id="CLU_066627_0_1_6"/>
<dbReference type="OrthoDB" id="9781305at2"/>
<dbReference type="UniPathway" id="UPA00241">
    <property type="reaction ID" value="UER00352"/>
</dbReference>
<dbReference type="Proteomes" id="UP000001036">
    <property type="component" value="Chromosome"/>
</dbReference>
<dbReference type="GO" id="GO:0005737">
    <property type="term" value="C:cytoplasm"/>
    <property type="evidence" value="ECO:0007669"/>
    <property type="project" value="UniProtKB-SubCell"/>
</dbReference>
<dbReference type="GO" id="GO:0005524">
    <property type="term" value="F:ATP binding"/>
    <property type="evidence" value="ECO:0007669"/>
    <property type="project" value="UniProtKB-UniRule"/>
</dbReference>
<dbReference type="GO" id="GO:0004594">
    <property type="term" value="F:pantothenate kinase activity"/>
    <property type="evidence" value="ECO:0007669"/>
    <property type="project" value="UniProtKB-UniRule"/>
</dbReference>
<dbReference type="GO" id="GO:0015937">
    <property type="term" value="P:coenzyme A biosynthetic process"/>
    <property type="evidence" value="ECO:0007669"/>
    <property type="project" value="UniProtKB-UniRule"/>
</dbReference>
<dbReference type="CDD" id="cd24015">
    <property type="entry name" value="ASKHA_NBD_PanK-III"/>
    <property type="match status" value="1"/>
</dbReference>
<dbReference type="Gene3D" id="3.30.420.40">
    <property type="match status" value="2"/>
</dbReference>
<dbReference type="HAMAP" id="MF_01274">
    <property type="entry name" value="Pantothen_kinase_3"/>
    <property type="match status" value="1"/>
</dbReference>
<dbReference type="InterPro" id="IPR043129">
    <property type="entry name" value="ATPase_NBD"/>
</dbReference>
<dbReference type="InterPro" id="IPR004619">
    <property type="entry name" value="Type_III_PanK"/>
</dbReference>
<dbReference type="NCBIfam" id="TIGR00671">
    <property type="entry name" value="baf"/>
    <property type="match status" value="1"/>
</dbReference>
<dbReference type="PANTHER" id="PTHR34265">
    <property type="entry name" value="TYPE III PANTOTHENATE KINASE"/>
    <property type="match status" value="1"/>
</dbReference>
<dbReference type="PANTHER" id="PTHR34265:SF1">
    <property type="entry name" value="TYPE III PANTOTHENATE KINASE"/>
    <property type="match status" value="1"/>
</dbReference>
<dbReference type="Pfam" id="PF03309">
    <property type="entry name" value="Pan_kinase"/>
    <property type="match status" value="1"/>
</dbReference>
<dbReference type="SUPFAM" id="SSF53067">
    <property type="entry name" value="Actin-like ATPase domain"/>
    <property type="match status" value="2"/>
</dbReference>
<gene>
    <name evidence="1" type="primary">coaX</name>
    <name type="ordered locus">CJA_0678</name>
</gene>
<evidence type="ECO:0000255" key="1">
    <source>
        <dbReference type="HAMAP-Rule" id="MF_01274"/>
    </source>
</evidence>
<organism>
    <name type="scientific">Cellvibrio japonicus (strain Ueda107)</name>
    <name type="common">Pseudomonas fluorescens subsp. cellulosa</name>
    <dbReference type="NCBI Taxonomy" id="498211"/>
    <lineage>
        <taxon>Bacteria</taxon>
        <taxon>Pseudomonadati</taxon>
        <taxon>Pseudomonadota</taxon>
        <taxon>Gammaproteobacteria</taxon>
        <taxon>Cellvibrionales</taxon>
        <taxon>Cellvibrionaceae</taxon>
        <taxon>Cellvibrio</taxon>
    </lineage>
</organism>